<dbReference type="EMBL" id="AC025416">
    <property type="protein sequence ID" value="AAF79658.1"/>
    <property type="status" value="ALT_SEQ"/>
    <property type="molecule type" value="Genomic_DNA"/>
</dbReference>
<dbReference type="EMBL" id="CP002684">
    <property type="protein sequence ID" value="AEE28864.1"/>
    <property type="molecule type" value="Genomic_DNA"/>
</dbReference>
<dbReference type="EMBL" id="AK230459">
    <property type="protein sequence ID" value="BAF02254.1"/>
    <property type="molecule type" value="mRNA"/>
</dbReference>
<dbReference type="PIR" id="A86258">
    <property type="entry name" value="A86258"/>
</dbReference>
<dbReference type="RefSeq" id="NP_172694.1">
    <property type="nucleotide sequence ID" value="NM_101102.3"/>
</dbReference>
<dbReference type="SMR" id="Q0WKV3"/>
<dbReference type="FunCoup" id="Q0WKV3">
    <property type="interactions" value="238"/>
</dbReference>
<dbReference type="STRING" id="3702.Q0WKV3"/>
<dbReference type="iPTMnet" id="Q0WKV3"/>
<dbReference type="PaxDb" id="3702-AT1G12300.1"/>
<dbReference type="ProteomicsDB" id="226331"/>
<dbReference type="EnsemblPlants" id="AT1G12300.1">
    <property type="protein sequence ID" value="AT1G12300.1"/>
    <property type="gene ID" value="AT1G12300"/>
</dbReference>
<dbReference type="GeneID" id="837784"/>
<dbReference type="Gramene" id="AT1G12300.1">
    <property type="protein sequence ID" value="AT1G12300.1"/>
    <property type="gene ID" value="AT1G12300"/>
</dbReference>
<dbReference type="KEGG" id="ath:AT1G12300"/>
<dbReference type="Araport" id="AT1G12300"/>
<dbReference type="TAIR" id="AT1G12300">
    <property type="gene designation" value="RFL2"/>
</dbReference>
<dbReference type="eggNOG" id="KOG4197">
    <property type="taxonomic scope" value="Eukaryota"/>
</dbReference>
<dbReference type="HOGENOM" id="CLU_002706_49_12_1"/>
<dbReference type="InParanoid" id="Q0WKV3"/>
<dbReference type="OMA" id="MEVGKTK"/>
<dbReference type="PhylomeDB" id="Q0WKV3"/>
<dbReference type="PRO" id="PR:Q0WKV3"/>
<dbReference type="Proteomes" id="UP000006548">
    <property type="component" value="Chromosome 1"/>
</dbReference>
<dbReference type="ExpressionAtlas" id="Q0WKV3">
    <property type="expression patterns" value="baseline and differential"/>
</dbReference>
<dbReference type="GO" id="GO:0005739">
    <property type="term" value="C:mitochondrion"/>
    <property type="evidence" value="ECO:0007669"/>
    <property type="project" value="UniProtKB-SubCell"/>
</dbReference>
<dbReference type="GO" id="GO:0003723">
    <property type="term" value="F:RNA binding"/>
    <property type="evidence" value="ECO:0000314"/>
    <property type="project" value="TAIR"/>
</dbReference>
<dbReference type="GO" id="GO:0090615">
    <property type="term" value="P:mitochondrial mRNA processing"/>
    <property type="evidence" value="ECO:0000315"/>
    <property type="project" value="TAIR"/>
</dbReference>
<dbReference type="FunFam" id="1.25.40.10:FF:000294">
    <property type="entry name" value="Pentatricopeptide repeat-containing protein At1g09900"/>
    <property type="match status" value="1"/>
</dbReference>
<dbReference type="FunFam" id="1.25.40.10:FF:003431">
    <property type="entry name" value="Pentatricopeptide repeat-containing protein At1g62670, mitochondrial"/>
    <property type="match status" value="1"/>
</dbReference>
<dbReference type="FunFam" id="1.25.40.10:FF:000558">
    <property type="entry name" value="Pentatricopeptide repeat-containing protein At5g39710"/>
    <property type="match status" value="1"/>
</dbReference>
<dbReference type="Gene3D" id="1.25.40.10">
    <property type="entry name" value="Tetratricopeptide repeat domain"/>
    <property type="match status" value="7"/>
</dbReference>
<dbReference type="InterPro" id="IPR051240">
    <property type="entry name" value="Mito_RNA-Proc/Resp"/>
</dbReference>
<dbReference type="InterPro" id="IPR002885">
    <property type="entry name" value="Pentatricopeptide_rpt"/>
</dbReference>
<dbReference type="InterPro" id="IPR011990">
    <property type="entry name" value="TPR-like_helical_dom_sf"/>
</dbReference>
<dbReference type="NCBIfam" id="TIGR00756">
    <property type="entry name" value="PPR"/>
    <property type="match status" value="13"/>
</dbReference>
<dbReference type="PANTHER" id="PTHR47933">
    <property type="entry name" value="PENTATRICOPEPTIDE REPEAT-CONTAINING PROTEIN 1, MITOCHONDRIAL"/>
    <property type="match status" value="1"/>
</dbReference>
<dbReference type="PANTHER" id="PTHR47933:SF2">
    <property type="entry name" value="PPR CONTAINING PLANT-LIKE PROTEIN"/>
    <property type="match status" value="1"/>
</dbReference>
<dbReference type="Pfam" id="PF01535">
    <property type="entry name" value="PPR"/>
    <property type="match status" value="1"/>
</dbReference>
<dbReference type="Pfam" id="PF12854">
    <property type="entry name" value="PPR_1"/>
    <property type="match status" value="2"/>
</dbReference>
<dbReference type="Pfam" id="PF13041">
    <property type="entry name" value="PPR_2"/>
    <property type="match status" value="5"/>
</dbReference>
<dbReference type="SUPFAM" id="SSF81901">
    <property type="entry name" value="HCP-like"/>
    <property type="match status" value="1"/>
</dbReference>
<dbReference type="PROSITE" id="PS51375">
    <property type="entry name" value="PPR"/>
    <property type="match status" value="15"/>
</dbReference>
<name>PPR36_ARATH</name>
<protein>
    <recommendedName>
        <fullName>Pentatricopeptide repeat-containing protein At1g12300, mitochondrial</fullName>
    </recommendedName>
</protein>
<gene>
    <name type="ordered locus">At1g12300</name>
    <name type="ORF">F5O11.4</name>
</gene>
<organism>
    <name type="scientific">Arabidopsis thaliana</name>
    <name type="common">Mouse-ear cress</name>
    <dbReference type="NCBI Taxonomy" id="3702"/>
    <lineage>
        <taxon>Eukaryota</taxon>
        <taxon>Viridiplantae</taxon>
        <taxon>Streptophyta</taxon>
        <taxon>Embryophyta</taxon>
        <taxon>Tracheophyta</taxon>
        <taxon>Spermatophyta</taxon>
        <taxon>Magnoliopsida</taxon>
        <taxon>eudicotyledons</taxon>
        <taxon>Gunneridae</taxon>
        <taxon>Pentapetalae</taxon>
        <taxon>rosids</taxon>
        <taxon>malvids</taxon>
        <taxon>Brassicales</taxon>
        <taxon>Brassicaceae</taxon>
        <taxon>Camelineae</taxon>
        <taxon>Arabidopsis</taxon>
    </lineage>
</organism>
<feature type="transit peptide" description="Mitochondrion" evidence="1">
    <location>
        <begin position="1"/>
        <end position="95"/>
    </location>
</feature>
<feature type="chain" id="PRO_0000342777" description="Pentatricopeptide repeat-containing protein At1g12300, mitochondrial">
    <location>
        <begin position="96"/>
        <end position="637"/>
    </location>
</feature>
<feature type="repeat" description="PPR 1">
    <location>
        <begin position="87"/>
        <end position="121"/>
    </location>
</feature>
<feature type="repeat" description="PPR 2">
    <location>
        <begin position="122"/>
        <end position="156"/>
    </location>
</feature>
<feature type="repeat" description="PPR 3">
    <location>
        <begin position="157"/>
        <end position="191"/>
    </location>
</feature>
<feature type="repeat" description="PPR 4">
    <location>
        <begin position="192"/>
        <end position="226"/>
    </location>
</feature>
<feature type="repeat" description="PPR 5">
    <location>
        <begin position="227"/>
        <end position="261"/>
    </location>
</feature>
<feature type="repeat" description="PPR 6">
    <location>
        <begin position="262"/>
        <end position="296"/>
    </location>
</feature>
<feature type="repeat" description="PPR 7">
    <location>
        <begin position="297"/>
        <end position="331"/>
    </location>
</feature>
<feature type="repeat" description="PPR 8">
    <location>
        <begin position="332"/>
        <end position="366"/>
    </location>
</feature>
<feature type="repeat" description="PPR 9">
    <location>
        <begin position="367"/>
        <end position="401"/>
    </location>
</feature>
<feature type="repeat" description="PPR 10">
    <location>
        <begin position="402"/>
        <end position="436"/>
    </location>
</feature>
<feature type="repeat" description="PPR 11">
    <location>
        <begin position="437"/>
        <end position="471"/>
    </location>
</feature>
<feature type="repeat" description="PPR 12">
    <location>
        <begin position="472"/>
        <end position="506"/>
    </location>
</feature>
<feature type="repeat" description="PPR 13">
    <location>
        <begin position="507"/>
        <end position="541"/>
    </location>
</feature>
<feature type="repeat" description="PPR 14">
    <location>
        <begin position="542"/>
        <end position="576"/>
    </location>
</feature>
<feature type="repeat" description="PPR 15">
    <location>
        <begin position="577"/>
        <end position="611"/>
    </location>
</feature>
<keyword id="KW-0496">Mitochondrion</keyword>
<keyword id="KW-1185">Reference proteome</keyword>
<keyword id="KW-0677">Repeat</keyword>
<keyword id="KW-0809">Transit peptide</keyword>
<proteinExistence type="evidence at transcript level"/>
<sequence>MVKLMIRRLSSQVSKFVQPRLLETGTLRIALINCPNELSFCCERGFSAFSDRNLSYRERLRSGLVDIKADDAIDLFRDMIHSRPLPTVIDFSRLFSAIAKTKQYDLVLALCKQMELKGIAHNLYTLSIMINCFCRCRKLCLAFSAMGKIIKLGYEPNTITFSTLINGLCLEGRVSEALELVDRMVEMGHKPDLITINTLVNGLCLSGKEAEAMLLIDKMVEYGCQPNAVTYGPVLNVMCKSGQTALAMELLRKMEERNIKLDAVKYSIIIDGLCKHGSLDNAFNLFNEMEMKGITTNIITYNILIGGFCNAGRWDDGAKLLRDMIKRKINPNVVTFSVLIDSFVKEGKLREAEELHKEMIHRGIAPDTITYTSLIDGFCKENHLDKANQMVDLMVSKGCDPNIRTFNILINGYCKANRIDDGLELFRKMSLRGVVADTVTYNTLIQGFCELGKLNVAKELFQEMVSRKVPPNIVTYKILLDGLCDNGESEKALEIFEKIEKSKMELDIGIYNIIIHGMCNASKVDDAWDLFCSLPLKGVKPGVKTYNIMIGGLCKKGPLSEAELLFRKMEEDGHAPDGWTYNILIRAHLGDGDATKSVKLIEELKRCGFSVDASTIKMVIDMLSDGRLKKSFLDMLS</sequence>
<accession>Q0WKV3</accession>
<accession>Q9LNB4</accession>
<comment type="subcellular location">
    <subcellularLocation>
        <location evidence="2">Mitochondrion</location>
    </subcellularLocation>
</comment>
<comment type="similarity">
    <text evidence="2">Belongs to the PPR family. P subfamily.</text>
</comment>
<comment type="sequence caution" evidence="2">
    <conflict type="erroneous gene model prediction">
        <sequence resource="EMBL-CDS" id="AAF79658"/>
    </conflict>
    <text>The predicted gene has been split into 2 genes: At1g12300 and At1g12310.</text>
</comment>
<comment type="online information" name="Pentatricopeptide repeat proteins">
    <link uri="https://ppr.plantenergy.uwa.edu.au"/>
</comment>
<evidence type="ECO:0000255" key="1"/>
<evidence type="ECO:0000305" key="2"/>
<reference key="1">
    <citation type="journal article" date="2000" name="Nature">
        <title>Sequence and analysis of chromosome 1 of the plant Arabidopsis thaliana.</title>
        <authorList>
            <person name="Theologis A."/>
            <person name="Ecker J.R."/>
            <person name="Palm C.J."/>
            <person name="Federspiel N.A."/>
            <person name="Kaul S."/>
            <person name="White O."/>
            <person name="Alonso J."/>
            <person name="Altafi H."/>
            <person name="Araujo R."/>
            <person name="Bowman C.L."/>
            <person name="Brooks S.Y."/>
            <person name="Buehler E."/>
            <person name="Chan A."/>
            <person name="Chao Q."/>
            <person name="Chen H."/>
            <person name="Cheuk R.F."/>
            <person name="Chin C.W."/>
            <person name="Chung M.K."/>
            <person name="Conn L."/>
            <person name="Conway A.B."/>
            <person name="Conway A.R."/>
            <person name="Creasy T.H."/>
            <person name="Dewar K."/>
            <person name="Dunn P."/>
            <person name="Etgu P."/>
            <person name="Feldblyum T.V."/>
            <person name="Feng J.-D."/>
            <person name="Fong B."/>
            <person name="Fujii C.Y."/>
            <person name="Gill J.E."/>
            <person name="Goldsmith A.D."/>
            <person name="Haas B."/>
            <person name="Hansen N.F."/>
            <person name="Hughes B."/>
            <person name="Huizar L."/>
            <person name="Hunter J.L."/>
            <person name="Jenkins J."/>
            <person name="Johnson-Hopson C."/>
            <person name="Khan S."/>
            <person name="Khaykin E."/>
            <person name="Kim C.J."/>
            <person name="Koo H.L."/>
            <person name="Kremenetskaia I."/>
            <person name="Kurtz D.B."/>
            <person name="Kwan A."/>
            <person name="Lam B."/>
            <person name="Langin-Hooper S."/>
            <person name="Lee A."/>
            <person name="Lee J.M."/>
            <person name="Lenz C.A."/>
            <person name="Li J.H."/>
            <person name="Li Y.-P."/>
            <person name="Lin X."/>
            <person name="Liu S.X."/>
            <person name="Liu Z.A."/>
            <person name="Luros J.S."/>
            <person name="Maiti R."/>
            <person name="Marziali A."/>
            <person name="Militscher J."/>
            <person name="Miranda M."/>
            <person name="Nguyen M."/>
            <person name="Nierman W.C."/>
            <person name="Osborne B.I."/>
            <person name="Pai G."/>
            <person name="Peterson J."/>
            <person name="Pham P.K."/>
            <person name="Rizzo M."/>
            <person name="Rooney T."/>
            <person name="Rowley D."/>
            <person name="Sakano H."/>
            <person name="Salzberg S.L."/>
            <person name="Schwartz J.R."/>
            <person name="Shinn P."/>
            <person name="Southwick A.M."/>
            <person name="Sun H."/>
            <person name="Tallon L.J."/>
            <person name="Tambunga G."/>
            <person name="Toriumi M.J."/>
            <person name="Town C.D."/>
            <person name="Utterback T."/>
            <person name="Van Aken S."/>
            <person name="Vaysberg M."/>
            <person name="Vysotskaia V.S."/>
            <person name="Walker M."/>
            <person name="Wu D."/>
            <person name="Yu G."/>
            <person name="Fraser C.M."/>
            <person name="Venter J.C."/>
            <person name="Davis R.W."/>
        </authorList>
    </citation>
    <scope>NUCLEOTIDE SEQUENCE [LARGE SCALE GENOMIC DNA]</scope>
    <source>
        <strain>cv. Columbia</strain>
    </source>
</reference>
<reference key="2">
    <citation type="journal article" date="2017" name="Plant J.">
        <title>Araport11: a complete reannotation of the Arabidopsis thaliana reference genome.</title>
        <authorList>
            <person name="Cheng C.Y."/>
            <person name="Krishnakumar V."/>
            <person name="Chan A.P."/>
            <person name="Thibaud-Nissen F."/>
            <person name="Schobel S."/>
            <person name="Town C.D."/>
        </authorList>
    </citation>
    <scope>GENOME REANNOTATION</scope>
    <source>
        <strain>cv. Columbia</strain>
    </source>
</reference>
<reference key="3">
    <citation type="submission" date="2006-07" db="EMBL/GenBank/DDBJ databases">
        <title>Large-scale analysis of RIKEN Arabidopsis full-length (RAFL) cDNAs.</title>
        <authorList>
            <person name="Totoki Y."/>
            <person name="Seki M."/>
            <person name="Ishida J."/>
            <person name="Nakajima M."/>
            <person name="Enju A."/>
            <person name="Kamiya A."/>
            <person name="Narusaka M."/>
            <person name="Shin-i T."/>
            <person name="Nakagawa M."/>
            <person name="Sakamoto N."/>
            <person name="Oishi K."/>
            <person name="Kohara Y."/>
            <person name="Kobayashi M."/>
            <person name="Toyoda A."/>
            <person name="Sakaki Y."/>
            <person name="Sakurai T."/>
            <person name="Iida K."/>
            <person name="Akiyama K."/>
            <person name="Satou M."/>
            <person name="Toyoda T."/>
            <person name="Konagaya A."/>
            <person name="Carninci P."/>
            <person name="Kawai J."/>
            <person name="Hayashizaki Y."/>
            <person name="Shinozaki K."/>
        </authorList>
    </citation>
    <scope>NUCLEOTIDE SEQUENCE [LARGE SCALE MRNA]</scope>
    <source>
        <strain>cv. Columbia</strain>
    </source>
</reference>
<reference key="4">
    <citation type="journal article" date="2004" name="Plant Cell">
        <title>Genome-wide analysis of Arabidopsis pentatricopeptide repeat proteins reveals their essential role in organelle biogenesis.</title>
        <authorList>
            <person name="Lurin C."/>
            <person name="Andres C."/>
            <person name="Aubourg S."/>
            <person name="Bellaoui M."/>
            <person name="Bitton F."/>
            <person name="Bruyere C."/>
            <person name="Caboche M."/>
            <person name="Debast C."/>
            <person name="Gualberto J."/>
            <person name="Hoffmann B."/>
            <person name="Lecharny A."/>
            <person name="Le Ret M."/>
            <person name="Martin-Magniette M.-L."/>
            <person name="Mireau H."/>
            <person name="Peeters N."/>
            <person name="Renou J.-P."/>
            <person name="Szurek B."/>
            <person name="Taconnat L."/>
            <person name="Small I."/>
        </authorList>
    </citation>
    <scope>GENE FAMILY</scope>
</reference>